<proteinExistence type="evidence at protein level"/>
<evidence type="ECO:0000250" key="1"/>
<evidence type="ECO:0000250" key="2">
    <source>
        <dbReference type="UniProtKB" id="Q9DBR7"/>
    </source>
</evidence>
<evidence type="ECO:0000256" key="3">
    <source>
        <dbReference type="SAM" id="MobiDB-lite"/>
    </source>
</evidence>
<evidence type="ECO:0000269" key="4">
    <source>
    </source>
</evidence>
<evidence type="ECO:0000269" key="5">
    <source>
    </source>
</evidence>
<evidence type="ECO:0000269" key="6">
    <source>
    </source>
</evidence>
<evidence type="ECO:0000269" key="7">
    <source>
    </source>
</evidence>
<evidence type="ECO:0000269" key="8">
    <source>
    </source>
</evidence>
<evidence type="ECO:0000269" key="9">
    <source>
    </source>
</evidence>
<evidence type="ECO:0000269" key="10">
    <source>
    </source>
</evidence>
<evidence type="ECO:0000269" key="11">
    <source>
    </source>
</evidence>
<evidence type="ECO:0000269" key="12">
    <source>
    </source>
</evidence>
<evidence type="ECO:0000269" key="13">
    <source>
    </source>
</evidence>
<evidence type="ECO:0000269" key="14">
    <source>
    </source>
</evidence>
<evidence type="ECO:0000269" key="15">
    <source>
    </source>
</evidence>
<evidence type="ECO:0000269" key="16">
    <source>
    </source>
</evidence>
<evidence type="ECO:0000269" key="17">
    <source>
    </source>
</evidence>
<evidence type="ECO:0000269" key="18">
    <source>
    </source>
</evidence>
<evidence type="ECO:0000269" key="19">
    <source>
    </source>
</evidence>
<evidence type="ECO:0000269" key="20">
    <source>
    </source>
</evidence>
<evidence type="ECO:0000269" key="21">
    <source>
    </source>
</evidence>
<evidence type="ECO:0000269" key="22">
    <source>
    </source>
</evidence>
<evidence type="ECO:0000269" key="23">
    <source>
    </source>
</evidence>
<evidence type="ECO:0000269" key="24">
    <source>
    </source>
</evidence>
<evidence type="ECO:0000269" key="25">
    <source>
    </source>
</evidence>
<evidence type="ECO:0000269" key="26">
    <source>
    </source>
</evidence>
<evidence type="ECO:0000269" key="27">
    <source>
    </source>
</evidence>
<evidence type="ECO:0000303" key="28">
    <source>
    </source>
</evidence>
<evidence type="ECO:0000303" key="29">
    <source>
    </source>
</evidence>
<evidence type="ECO:0000303" key="30">
    <source ref="2"/>
</evidence>
<evidence type="ECO:0000303" key="31">
    <source ref="3"/>
</evidence>
<evidence type="ECO:0000305" key="32"/>
<evidence type="ECO:0000312" key="33">
    <source>
        <dbReference type="HGNC" id="HGNC:7618"/>
    </source>
</evidence>
<evidence type="ECO:0007744" key="34">
    <source>
    </source>
</evidence>
<evidence type="ECO:0007744" key="35">
    <source>
    </source>
</evidence>
<evidence type="ECO:0007744" key="36">
    <source>
    </source>
</evidence>
<evidence type="ECO:0007744" key="37">
    <source>
    </source>
</evidence>
<evidence type="ECO:0007744" key="38">
    <source>
    </source>
</evidence>
<evidence type="ECO:0007829" key="39">
    <source>
        <dbReference type="PDB" id="2KJY"/>
    </source>
</evidence>
<evidence type="ECO:0007829" key="40">
    <source>
        <dbReference type="PDB" id="5HUZ"/>
    </source>
</evidence>
<sequence length="1030" mass="115281">MKMADAKQKRNEQLKRWIGSETDLEPPVVKRQKTKVKFDDGAVFLAACSSGDTDEVLKLLHRGADINYANVDGLTALHQACIDDNVDMVKFLVENGANINQPDNEGWIPLHAAASCGYLDIAEFLIGQGAHVGAVNSEGDTPLDIAEEEAMEELLQNEVNRQGVDIEAARKEEERIMLRDARQWLNSGHINDVRHAKSGGTALHVAAAKGYTEVLKLLIQAGYDVNIKDYDGWTPLHAAAHWGKEEACRILVDNLCDMEMVNKVGQTAFDVADEDILGYLEELQKKQNLLHSEKRDKKSPLIESTANMDNNQSQKTFKNKETLIIEPEKNASRIESLEQEKVDEEEEGKKDESSCSSEEDEEDDSESEAETDKTKPLASVTNANTSSTQAAPVAVTTPTVSSGQATPTSPIKKFPTTATKISPKEEERKDESPATWRLGLRKTGSYGALAEITASKEGQKEKDTAGVTRSASSPRLSSSLDNKEKEKDSKGTRLAYVAPTIPRRLASTSDIEEKENRDSSSLRTSSSYTRRKWEDDLKKNSSVNEGSTYHKSCSFGRRQDDLISSSVPSTTSTPTVTSAAGLQKSLLSSTSTTTKITTGSSSAGTQSSTSNRLWAEDSTEKEKDSVPTAVTIPVAPTVVNAAASTTTLTTTTAGTVSSTTEVRERRRSYLTPVRDEESESQRKARSRQARQSRRSTQGVTLTDLQEAEKTIGRSRSTRTREQENEEKEKEEKEKQDKEKQEEKKESETSREDEYKQKYSRTYDETYQRYRPVSTSSSTTPSSSLSTMSSSLYASSQLNRPNSLVGITSAYSRGITKENEREGEKREEEKEGEDKSQPKSIRERRRPREKRRSTGVSFWTQDSDENEQEQQSDTEEGSNKKETQTDSISRYETSSTSAGDRYDSLLGRSGSYSYLEERKPYSSRLEKDDSTDFKKLYEQILAENEKLKAQLHDTNMELTDLKLQLEKATQRQERFADRSLLEMEKRERRALERRISEMEEELKMLPDLKADNQRLKDENGALIRVISKLSK</sequence>
<feature type="chain" id="PRO_0000067025" description="Protein phosphatase 1 regulatory subunit 12A">
    <location>
        <begin position="1"/>
        <end position="1030"/>
    </location>
</feature>
<feature type="repeat" description="ANK 1">
    <location>
        <begin position="39"/>
        <end position="68"/>
    </location>
</feature>
<feature type="repeat" description="ANK 2">
    <location>
        <begin position="72"/>
        <end position="101"/>
    </location>
</feature>
<feature type="repeat" description="ANK 3">
    <location>
        <begin position="105"/>
        <end position="134"/>
    </location>
</feature>
<feature type="repeat" description="ANK 4">
    <location>
        <begin position="138"/>
        <end position="164"/>
    </location>
</feature>
<feature type="repeat" description="ANK 5">
    <location>
        <begin position="198"/>
        <end position="227"/>
    </location>
</feature>
<feature type="repeat" description="ANK 6">
    <location>
        <begin position="231"/>
        <end position="260"/>
    </location>
</feature>
<feature type="region of interest" description="Disordered" evidence="3">
    <location>
        <begin position="290"/>
        <end position="628"/>
    </location>
</feature>
<feature type="region of interest" description="Disordered" evidence="3">
    <location>
        <begin position="643"/>
        <end position="928"/>
    </location>
</feature>
<feature type="region of interest" description="Interaction with ROCK2" evidence="20">
    <location>
        <begin position="682"/>
        <end position="864"/>
    </location>
</feature>
<feature type="short sequence motif" description="KVKF motif">
    <location>
        <begin position="35"/>
        <end position="38"/>
    </location>
</feature>
<feature type="compositionally biased region" description="Basic and acidic residues" evidence="3">
    <location>
        <begin position="291"/>
        <end position="300"/>
    </location>
</feature>
<feature type="compositionally biased region" description="Polar residues" evidence="3">
    <location>
        <begin position="302"/>
        <end position="316"/>
    </location>
</feature>
<feature type="compositionally biased region" description="Basic and acidic residues" evidence="3">
    <location>
        <begin position="318"/>
        <end position="340"/>
    </location>
</feature>
<feature type="compositionally biased region" description="Acidic residues" evidence="3">
    <location>
        <begin position="357"/>
        <end position="369"/>
    </location>
</feature>
<feature type="compositionally biased region" description="Low complexity" evidence="3">
    <location>
        <begin position="385"/>
        <end position="402"/>
    </location>
</feature>
<feature type="compositionally biased region" description="Basic and acidic residues" evidence="3">
    <location>
        <begin position="422"/>
        <end position="432"/>
    </location>
</feature>
<feature type="compositionally biased region" description="Low complexity" evidence="3">
    <location>
        <begin position="469"/>
        <end position="480"/>
    </location>
</feature>
<feature type="compositionally biased region" description="Basic and acidic residues" evidence="3">
    <location>
        <begin position="481"/>
        <end position="491"/>
    </location>
</feature>
<feature type="compositionally biased region" description="Polar residues" evidence="3">
    <location>
        <begin position="540"/>
        <end position="551"/>
    </location>
</feature>
<feature type="compositionally biased region" description="Low complexity" evidence="3">
    <location>
        <begin position="564"/>
        <end position="610"/>
    </location>
</feature>
<feature type="compositionally biased region" description="Basic and acidic residues" evidence="3">
    <location>
        <begin position="614"/>
        <end position="625"/>
    </location>
</feature>
<feature type="compositionally biased region" description="Low complexity" evidence="3">
    <location>
        <begin position="643"/>
        <end position="660"/>
    </location>
</feature>
<feature type="compositionally biased region" description="Basic and acidic residues" evidence="3">
    <location>
        <begin position="673"/>
        <end position="682"/>
    </location>
</feature>
<feature type="compositionally biased region" description="Basic residues" evidence="3">
    <location>
        <begin position="683"/>
        <end position="693"/>
    </location>
</feature>
<feature type="compositionally biased region" description="Basic and acidic residues" evidence="3">
    <location>
        <begin position="718"/>
        <end position="767"/>
    </location>
</feature>
<feature type="compositionally biased region" description="Low complexity" evidence="3">
    <location>
        <begin position="773"/>
        <end position="795"/>
    </location>
</feature>
<feature type="compositionally biased region" description="Polar residues" evidence="3">
    <location>
        <begin position="796"/>
        <end position="810"/>
    </location>
</feature>
<feature type="compositionally biased region" description="Basic and acidic residues" evidence="3">
    <location>
        <begin position="814"/>
        <end position="840"/>
    </location>
</feature>
<feature type="compositionally biased region" description="Basic residues" evidence="3">
    <location>
        <begin position="841"/>
        <end position="852"/>
    </location>
</feature>
<feature type="compositionally biased region" description="Acidic residues" evidence="3">
    <location>
        <begin position="861"/>
        <end position="875"/>
    </location>
</feature>
<feature type="compositionally biased region" description="Polar residues" evidence="3">
    <location>
        <begin position="884"/>
        <end position="897"/>
    </location>
</feature>
<feature type="compositionally biased region" description="Low complexity" evidence="3">
    <location>
        <begin position="903"/>
        <end position="913"/>
    </location>
</feature>
<feature type="compositionally biased region" description="Basic and acidic residues" evidence="3">
    <location>
        <begin position="914"/>
        <end position="928"/>
    </location>
</feature>
<feature type="modified residue" description="(3S)-3-hydroxyasparagine; by HIF1AN; partial" evidence="21">
    <location>
        <position position="67"/>
    </location>
</feature>
<feature type="modified residue" description="(3S)-3-hydroxyasparagine; by HIF1AN; partial" evidence="21">
    <location>
        <position position="100"/>
    </location>
</feature>
<feature type="modified residue" description="(3S)-3-hydroxyasparagine; by HIF1AN; partial" evidence="21">
    <location>
        <position position="226"/>
    </location>
</feature>
<feature type="modified residue" description="Phosphoserine" evidence="34 36 37 38">
    <location>
        <position position="299"/>
    </location>
</feature>
<feature type="modified residue" description="Phosphoserine" evidence="34 36 37 38">
    <location>
        <position position="422"/>
    </location>
</feature>
<feature type="modified residue" description="Phosphoserine" evidence="18">
    <location>
        <position position="432"/>
    </location>
</feature>
<feature type="modified residue" description="Phosphothreonine" evidence="38">
    <location>
        <position position="443"/>
    </location>
</feature>
<feature type="modified residue" description="Phosphoserine; by NUAK1" evidence="24 34 38">
    <location>
        <position position="445"/>
    </location>
</feature>
<feature type="modified residue" description="Phosphotyrosine" evidence="38">
    <location>
        <position position="446"/>
    </location>
</feature>
<feature type="modified residue" description="Phosphoserine; by NUAK1" evidence="24">
    <location>
        <position position="472"/>
    </location>
</feature>
<feature type="modified residue" description="Phosphoserine; by CDK1" evidence="18 38">
    <location>
        <position position="473"/>
    </location>
</feature>
<feature type="modified residue" description="Phosphoserine" evidence="34">
    <location>
        <position position="477"/>
    </location>
</feature>
<feature type="modified residue" description="Phosphoserine" evidence="34 37 38">
    <location>
        <position position="507"/>
    </location>
</feature>
<feature type="modified residue" description="Phosphoserine" evidence="38">
    <location>
        <position position="509"/>
    </location>
</feature>
<feature type="modified residue" description="Phosphoserine" evidence="18">
    <location>
        <position position="601"/>
    </location>
</feature>
<feature type="modified residue" description="Phosphoserine" evidence="38">
    <location>
        <position position="618"/>
    </location>
</feature>
<feature type="modified residue" description="Phosphoserine; by PKA and PKG; in vitro" evidence="13">
    <location>
        <position position="692"/>
    </location>
</feature>
<feature type="modified residue" description="Phosphoserine; by PKA and PKG; in vitro" evidence="13">
    <location>
        <position position="695"/>
    </location>
</feature>
<feature type="modified residue" description="Phosphothreonine; by ROCK1, ROCK2, CDC42BP, ZIPK/DAPK3 and RAF1" evidence="9 13 14 22 23 34 38">
    <location>
        <position position="696"/>
    </location>
</feature>
<feature type="modified residue" description="Phosphoserine" evidence="2">
    <location>
        <position position="802"/>
    </location>
</feature>
<feature type="modified residue" description="Phosphoserine; by ROCK2" evidence="8 13">
    <location>
        <position position="852"/>
    </location>
</feature>
<feature type="modified residue" description="Phosphoserine" evidence="34">
    <location>
        <position position="862"/>
    </location>
</feature>
<feature type="modified residue" description="Phosphoserine" evidence="34 35 36">
    <location>
        <position position="871"/>
    </location>
</feature>
<feature type="modified residue" description="Phosphoserine" evidence="38">
    <location>
        <position position="903"/>
    </location>
</feature>
<feature type="modified residue" description="Phosphoserine" evidence="38">
    <location>
        <position position="908"/>
    </location>
</feature>
<feature type="modified residue" description="Phosphoserine; by NUAK1" evidence="24 38">
    <location>
        <position position="910"/>
    </location>
</feature>
<feature type="modified residue" description="Phosphoserine" evidence="38">
    <location>
        <position position="995"/>
    </location>
</feature>
<feature type="splice variant" id="VSP_045079" description="In isoform 5." evidence="28">
    <location>
        <begin position="1"/>
        <end position="87"/>
    </location>
</feature>
<feature type="splice variant" id="VSP_009251" description="In isoform 3." evidence="31">
    <location>
        <begin position="552"/>
        <end position="607"/>
    </location>
</feature>
<feature type="splice variant" id="VSP_009252" description="In isoform 4." evidence="29">
    <location>
        <begin position="608"/>
        <end position="666"/>
    </location>
</feature>
<feature type="splice variant" id="VSP_009253" description="In isoform 2." evidence="30">
    <location>
        <begin position="935"/>
        <end position="969"/>
    </location>
</feature>
<feature type="sequence variant" id="VAR_038949" description="In dbSNP:rs12582646.">
    <original>C</original>
    <variation>W</variation>
    <location>
        <position position="116"/>
    </location>
</feature>
<feature type="sequence variant" id="VAR_038950" description="In dbSNP:rs2596781.">
    <original>T</original>
    <variation>P</variation>
    <location>
        <position position="305"/>
    </location>
</feature>
<feature type="sequence variant" id="VAR_083871" description="In GUBS." evidence="27">
    <location>
        <begin position="472"/>
        <end position="1030"/>
    </location>
</feature>
<feature type="sequence variant" id="VAR_083872" description="In GUBS." evidence="27">
    <location>
        <begin position="504"/>
        <end position="1030"/>
    </location>
</feature>
<feature type="sequence variant" id="VAR_083873" description="In GUBS." evidence="27">
    <location>
        <begin position="678"/>
        <end position="1030"/>
    </location>
</feature>
<feature type="sequence variant" id="VAR_038951" description="In dbSNP:rs12820960.">
    <original>K</original>
    <variation>N</variation>
    <location>
        <position position="734"/>
    </location>
</feature>
<feature type="sequence variant" id="VAR_083874" description="In GUBS." evidence="27">
    <location>
        <begin position="858"/>
        <end position="1030"/>
    </location>
</feature>
<feature type="sequence variant" id="VAR_083875" description="In GUBS." evidence="27">
    <location>
        <begin position="900"/>
        <end position="1030"/>
    </location>
</feature>
<feature type="mutagenesis site" description="Abolishes phosphorylation by NUAK1 and interaction with 14-3-3; when associated with A-472 and A-910.">
    <original>S</original>
    <variation>A</variation>
    <location>
        <position position="445"/>
    </location>
</feature>
<feature type="mutagenesis site" description="Abolishes phosphorylation by NUAK1 and interaction with 14-3-3; when associated with A-445 and A-910.">
    <original>S</original>
    <variation>A</variation>
    <location>
        <position position="472"/>
    </location>
</feature>
<feature type="mutagenesis site" description="Abolishes binding to the POLO box domains of PLK1." evidence="18">
    <original>S</original>
    <variation>A</variation>
    <location>
        <position position="473"/>
    </location>
</feature>
<feature type="mutagenesis site" description="Abolishes phosphorylation by NUAK1 and interaction with 14-3-3; when associated with A-445 and A-472.">
    <original>S</original>
    <variation>A</variation>
    <location>
        <position position="910"/>
    </location>
</feature>
<feature type="mutagenesis site" description="Loss of binding to PRKG1; when associated with A-1014." evidence="11">
    <original>L</original>
    <variation>A</variation>
    <location>
        <position position="1007"/>
    </location>
</feature>
<feature type="mutagenesis site" description="Loss of binding to PRKG1; when associated with A-1007." evidence="11">
    <original>L</original>
    <variation>A</variation>
    <location>
        <position position="1014"/>
    </location>
</feature>
<feature type="mutagenesis site" description="Loss of binding to PRKG1; when associated with A-1028." evidence="11">
    <original>L</original>
    <variation>A</variation>
    <location>
        <position position="1021"/>
    </location>
</feature>
<feature type="mutagenesis site" description="Loss of binding to PRKG1; when associated with A-1021." evidence="11">
    <original>L</original>
    <variation>A</variation>
    <location>
        <position position="1028"/>
    </location>
</feature>
<feature type="sequence conflict" description="In Ref. 6; AAI11753." evidence="32" ref="6">
    <original>K</original>
    <variation>Q</variation>
    <location>
        <position position="2"/>
    </location>
</feature>
<feature type="sequence conflict" description="In Ref. 6; AAH92481." evidence="32" ref="6">
    <original>T</original>
    <variation>A</variation>
    <location>
        <position position="322"/>
    </location>
</feature>
<feature type="sequence conflict" description="In Ref. 4; BAG63921." evidence="32" ref="4">
    <original>K</original>
    <variation>R</variation>
    <location>
        <position position="350"/>
    </location>
</feature>
<feature type="sequence conflict" description="In Ref. 6; AAH92481." evidence="32" ref="6">
    <original>A</original>
    <variation>V</variation>
    <location>
        <position position="653"/>
    </location>
</feature>
<feature type="sequence conflict" description="In Ref. 2; AAQ88438." evidence="32" ref="2">
    <original>R</original>
    <variation>G</variation>
    <location>
        <position position="690"/>
    </location>
</feature>
<feature type="sequence conflict" description="In Ref. 2; AAQ88438." evidence="32" ref="2">
    <original>S</original>
    <variation>P</variation>
    <location>
        <position position="783"/>
    </location>
</feature>
<feature type="sequence conflict" description="In Ref. 2; AAQ88438." evidence="32" ref="2">
    <original>T</original>
    <variation>P</variation>
    <location>
        <position position="930"/>
    </location>
</feature>
<feature type="sequence conflict" description="In Ref. 2; AAQ88438." evidence="32" ref="2">
    <original>D</original>
    <variation>G</variation>
    <location>
        <position position="959"/>
    </location>
</feature>
<feature type="sequence conflict" description="In Ref. 2; AAQ88438." evidence="32" ref="2">
    <original>K</original>
    <variation>Q</variation>
    <location>
        <position position="1027"/>
    </location>
</feature>
<feature type="helix" evidence="39">
    <location>
        <begin position="659"/>
        <end position="668"/>
    </location>
</feature>
<feature type="helix" evidence="39">
    <location>
        <begin position="674"/>
        <end position="696"/>
    </location>
</feature>
<feature type="turn" evidence="39">
    <location>
        <begin position="699"/>
        <end position="701"/>
    </location>
</feature>
<feature type="helix" evidence="39">
    <location>
        <begin position="702"/>
        <end position="710"/>
    </location>
</feature>
<feature type="helix" evidence="40">
    <location>
        <begin position="932"/>
        <end position="965"/>
    </location>
</feature>
<reference key="1">
    <citation type="journal article" date="1997" name="Genomics">
        <title>Localization of the gene coding for myosin phosphatase, target subunit 1 (MYPT1) to human chromosome 12q15-q21.</title>
        <authorList>
            <person name="Takahashi N."/>
            <person name="Ito M."/>
            <person name="Tanaka J."/>
            <person name="Nakano T."/>
            <person name="Kaibuchi K."/>
            <person name="Odai H."/>
            <person name="Takemura K."/>
        </authorList>
    </citation>
    <scope>NUCLEOTIDE SEQUENCE [MRNA] (ISOFORM 1)</scope>
    <source>
        <tissue>Brain</tissue>
        <tissue>Liver</tissue>
    </source>
</reference>
<reference key="2">
    <citation type="submission" date="2001-12" db="EMBL/GenBank/DDBJ databases">
        <authorList>
            <person name="Guo J.H."/>
            <person name="Chen X.Y."/>
            <person name="Yu L."/>
        </authorList>
    </citation>
    <scope>NUCLEOTIDE SEQUENCE [LARGE SCALE MRNA] (ISOFORM 2)</scope>
    <source>
        <tissue>Liver</tissue>
    </source>
</reference>
<reference key="3">
    <citation type="submission" date="2003-09" db="EMBL/GenBank/DDBJ databases">
        <title>Molecular cloning and functional analysis of a new isoform of human MYPT1.</title>
        <authorList>
            <person name="Xia D."/>
            <person name="Kamm K."/>
            <person name="Stull J.T."/>
        </authorList>
    </citation>
    <scope>NUCLEOTIDE SEQUENCE [MRNA] (ISOFORM 3)</scope>
</reference>
<reference key="4">
    <citation type="journal article" date="2004" name="Nat. Genet.">
        <title>Complete sequencing and characterization of 21,243 full-length human cDNAs.</title>
        <authorList>
            <person name="Ota T."/>
            <person name="Suzuki Y."/>
            <person name="Nishikawa T."/>
            <person name="Otsuki T."/>
            <person name="Sugiyama T."/>
            <person name="Irie R."/>
            <person name="Wakamatsu A."/>
            <person name="Hayashi K."/>
            <person name="Sato H."/>
            <person name="Nagai K."/>
            <person name="Kimura K."/>
            <person name="Makita H."/>
            <person name="Sekine M."/>
            <person name="Obayashi M."/>
            <person name="Nishi T."/>
            <person name="Shibahara T."/>
            <person name="Tanaka T."/>
            <person name="Ishii S."/>
            <person name="Yamamoto J."/>
            <person name="Saito K."/>
            <person name="Kawai Y."/>
            <person name="Isono Y."/>
            <person name="Nakamura Y."/>
            <person name="Nagahari K."/>
            <person name="Murakami K."/>
            <person name="Yasuda T."/>
            <person name="Iwayanagi T."/>
            <person name="Wagatsuma M."/>
            <person name="Shiratori A."/>
            <person name="Sudo H."/>
            <person name="Hosoiri T."/>
            <person name="Kaku Y."/>
            <person name="Kodaira H."/>
            <person name="Kondo H."/>
            <person name="Sugawara M."/>
            <person name="Takahashi M."/>
            <person name="Kanda K."/>
            <person name="Yokoi T."/>
            <person name="Furuya T."/>
            <person name="Kikkawa E."/>
            <person name="Omura Y."/>
            <person name="Abe K."/>
            <person name="Kamihara K."/>
            <person name="Katsuta N."/>
            <person name="Sato K."/>
            <person name="Tanikawa M."/>
            <person name="Yamazaki M."/>
            <person name="Ninomiya K."/>
            <person name="Ishibashi T."/>
            <person name="Yamashita H."/>
            <person name="Murakawa K."/>
            <person name="Fujimori K."/>
            <person name="Tanai H."/>
            <person name="Kimata M."/>
            <person name="Watanabe M."/>
            <person name="Hiraoka S."/>
            <person name="Chiba Y."/>
            <person name="Ishida S."/>
            <person name="Ono Y."/>
            <person name="Takiguchi S."/>
            <person name="Watanabe S."/>
            <person name="Yosida M."/>
            <person name="Hotuta T."/>
            <person name="Kusano J."/>
            <person name="Kanehori K."/>
            <person name="Takahashi-Fujii A."/>
            <person name="Hara H."/>
            <person name="Tanase T.-O."/>
            <person name="Nomura Y."/>
            <person name="Togiya S."/>
            <person name="Komai F."/>
            <person name="Hara R."/>
            <person name="Takeuchi K."/>
            <person name="Arita M."/>
            <person name="Imose N."/>
            <person name="Musashino K."/>
            <person name="Yuuki H."/>
            <person name="Oshima A."/>
            <person name="Sasaki N."/>
            <person name="Aotsuka S."/>
            <person name="Yoshikawa Y."/>
            <person name="Matsunawa H."/>
            <person name="Ichihara T."/>
            <person name="Shiohata N."/>
            <person name="Sano S."/>
            <person name="Moriya S."/>
            <person name="Momiyama H."/>
            <person name="Satoh N."/>
            <person name="Takami S."/>
            <person name="Terashima Y."/>
            <person name="Suzuki O."/>
            <person name="Nakagawa S."/>
            <person name="Senoh A."/>
            <person name="Mizoguchi H."/>
            <person name="Goto Y."/>
            <person name="Shimizu F."/>
            <person name="Wakebe H."/>
            <person name="Hishigaki H."/>
            <person name="Watanabe T."/>
            <person name="Sugiyama A."/>
            <person name="Takemoto M."/>
            <person name="Kawakami B."/>
            <person name="Yamazaki M."/>
            <person name="Watanabe K."/>
            <person name="Kumagai A."/>
            <person name="Itakura S."/>
            <person name="Fukuzumi Y."/>
            <person name="Fujimori Y."/>
            <person name="Komiyama M."/>
            <person name="Tashiro H."/>
            <person name="Tanigami A."/>
            <person name="Fujiwara T."/>
            <person name="Ono T."/>
            <person name="Yamada K."/>
            <person name="Fujii Y."/>
            <person name="Ozaki K."/>
            <person name="Hirao M."/>
            <person name="Ohmori Y."/>
            <person name="Kawabata A."/>
            <person name="Hikiji T."/>
            <person name="Kobatake N."/>
            <person name="Inagaki H."/>
            <person name="Ikema Y."/>
            <person name="Okamoto S."/>
            <person name="Okitani R."/>
            <person name="Kawakami T."/>
            <person name="Noguchi S."/>
            <person name="Itoh T."/>
            <person name="Shigeta K."/>
            <person name="Senba T."/>
            <person name="Matsumura K."/>
            <person name="Nakajima Y."/>
            <person name="Mizuno T."/>
            <person name="Morinaga M."/>
            <person name="Sasaki M."/>
            <person name="Togashi T."/>
            <person name="Oyama M."/>
            <person name="Hata H."/>
            <person name="Watanabe M."/>
            <person name="Komatsu T."/>
            <person name="Mizushima-Sugano J."/>
            <person name="Satoh T."/>
            <person name="Shirai Y."/>
            <person name="Takahashi Y."/>
            <person name="Nakagawa K."/>
            <person name="Okumura K."/>
            <person name="Nagase T."/>
            <person name="Nomura N."/>
            <person name="Kikuchi H."/>
            <person name="Masuho Y."/>
            <person name="Yamashita R."/>
            <person name="Nakai K."/>
            <person name="Yada T."/>
            <person name="Nakamura Y."/>
            <person name="Ohara O."/>
            <person name="Isogai T."/>
            <person name="Sugano S."/>
        </authorList>
    </citation>
    <scope>NUCLEOTIDE SEQUENCE [LARGE SCALE MRNA] (ISOFORM 5)</scope>
    <source>
        <tissue>Testis</tissue>
    </source>
</reference>
<reference key="5">
    <citation type="journal article" date="2006" name="Nature">
        <title>The finished DNA sequence of human chromosome 12.</title>
        <authorList>
            <person name="Scherer S.E."/>
            <person name="Muzny D.M."/>
            <person name="Buhay C.J."/>
            <person name="Chen R."/>
            <person name="Cree A."/>
            <person name="Ding Y."/>
            <person name="Dugan-Rocha S."/>
            <person name="Gill R."/>
            <person name="Gunaratne P."/>
            <person name="Harris R.A."/>
            <person name="Hawes A.C."/>
            <person name="Hernandez J."/>
            <person name="Hodgson A.V."/>
            <person name="Hume J."/>
            <person name="Jackson A."/>
            <person name="Khan Z.M."/>
            <person name="Kovar-Smith C."/>
            <person name="Lewis L.R."/>
            <person name="Lozado R.J."/>
            <person name="Metzker M.L."/>
            <person name="Milosavljevic A."/>
            <person name="Miner G.R."/>
            <person name="Montgomery K.T."/>
            <person name="Morgan M.B."/>
            <person name="Nazareth L.V."/>
            <person name="Scott G."/>
            <person name="Sodergren E."/>
            <person name="Song X.-Z."/>
            <person name="Steffen D."/>
            <person name="Lovering R.C."/>
            <person name="Wheeler D.A."/>
            <person name="Worley K.C."/>
            <person name="Yuan Y."/>
            <person name="Zhang Z."/>
            <person name="Adams C.Q."/>
            <person name="Ansari-Lari M.A."/>
            <person name="Ayele M."/>
            <person name="Brown M.J."/>
            <person name="Chen G."/>
            <person name="Chen Z."/>
            <person name="Clerc-Blankenburg K.P."/>
            <person name="Davis C."/>
            <person name="Delgado O."/>
            <person name="Dinh H.H."/>
            <person name="Draper H."/>
            <person name="Gonzalez-Garay M.L."/>
            <person name="Havlak P."/>
            <person name="Jackson L.R."/>
            <person name="Jacob L.S."/>
            <person name="Kelly S.H."/>
            <person name="Li L."/>
            <person name="Li Z."/>
            <person name="Liu J."/>
            <person name="Liu W."/>
            <person name="Lu J."/>
            <person name="Maheshwari M."/>
            <person name="Nguyen B.-V."/>
            <person name="Okwuonu G.O."/>
            <person name="Pasternak S."/>
            <person name="Perez L.M."/>
            <person name="Plopper F.J.H."/>
            <person name="Santibanez J."/>
            <person name="Shen H."/>
            <person name="Tabor P.E."/>
            <person name="Verduzco D."/>
            <person name="Waldron L."/>
            <person name="Wang Q."/>
            <person name="Williams G.A."/>
            <person name="Zhang J."/>
            <person name="Zhou J."/>
            <person name="Allen C.C."/>
            <person name="Amin A.G."/>
            <person name="Anyalebechi V."/>
            <person name="Bailey M."/>
            <person name="Barbaria J.A."/>
            <person name="Bimage K.E."/>
            <person name="Bryant N.P."/>
            <person name="Burch P.E."/>
            <person name="Burkett C.E."/>
            <person name="Burrell K.L."/>
            <person name="Calderon E."/>
            <person name="Cardenas V."/>
            <person name="Carter K."/>
            <person name="Casias K."/>
            <person name="Cavazos I."/>
            <person name="Cavazos S.R."/>
            <person name="Ceasar H."/>
            <person name="Chacko J."/>
            <person name="Chan S.N."/>
            <person name="Chavez D."/>
            <person name="Christopoulos C."/>
            <person name="Chu J."/>
            <person name="Cockrell R."/>
            <person name="Cox C.D."/>
            <person name="Dang M."/>
            <person name="Dathorne S.R."/>
            <person name="David R."/>
            <person name="Davis C.M."/>
            <person name="Davy-Carroll L."/>
            <person name="Deshazo D.R."/>
            <person name="Donlin J.E."/>
            <person name="D'Souza L."/>
            <person name="Eaves K.A."/>
            <person name="Egan A."/>
            <person name="Emery-Cohen A.J."/>
            <person name="Escotto M."/>
            <person name="Flagg N."/>
            <person name="Forbes L.D."/>
            <person name="Gabisi A.M."/>
            <person name="Garza M."/>
            <person name="Hamilton C."/>
            <person name="Henderson N."/>
            <person name="Hernandez O."/>
            <person name="Hines S."/>
            <person name="Hogues M.E."/>
            <person name="Huang M."/>
            <person name="Idlebird D.G."/>
            <person name="Johnson R."/>
            <person name="Jolivet A."/>
            <person name="Jones S."/>
            <person name="Kagan R."/>
            <person name="King L.M."/>
            <person name="Leal B."/>
            <person name="Lebow H."/>
            <person name="Lee S."/>
            <person name="LeVan J.M."/>
            <person name="Lewis L.C."/>
            <person name="London P."/>
            <person name="Lorensuhewa L.M."/>
            <person name="Loulseged H."/>
            <person name="Lovett D.A."/>
            <person name="Lucier A."/>
            <person name="Lucier R.L."/>
            <person name="Ma J."/>
            <person name="Madu R.C."/>
            <person name="Mapua P."/>
            <person name="Martindale A.D."/>
            <person name="Martinez E."/>
            <person name="Massey E."/>
            <person name="Mawhiney S."/>
            <person name="Meador M.G."/>
            <person name="Mendez S."/>
            <person name="Mercado C."/>
            <person name="Mercado I.C."/>
            <person name="Merritt C.E."/>
            <person name="Miner Z.L."/>
            <person name="Minja E."/>
            <person name="Mitchell T."/>
            <person name="Mohabbat F."/>
            <person name="Mohabbat K."/>
            <person name="Montgomery B."/>
            <person name="Moore N."/>
            <person name="Morris S."/>
            <person name="Munidasa M."/>
            <person name="Ngo R.N."/>
            <person name="Nguyen N.B."/>
            <person name="Nickerson E."/>
            <person name="Nwaokelemeh O.O."/>
            <person name="Nwokenkwo S."/>
            <person name="Obregon M."/>
            <person name="Oguh M."/>
            <person name="Oragunye N."/>
            <person name="Oviedo R.J."/>
            <person name="Parish B.J."/>
            <person name="Parker D.N."/>
            <person name="Parrish J."/>
            <person name="Parks K.L."/>
            <person name="Paul H.A."/>
            <person name="Payton B.A."/>
            <person name="Perez A."/>
            <person name="Perrin W."/>
            <person name="Pickens A."/>
            <person name="Primus E.L."/>
            <person name="Pu L.-L."/>
            <person name="Puazo M."/>
            <person name="Quiles M.M."/>
            <person name="Quiroz J.B."/>
            <person name="Rabata D."/>
            <person name="Reeves K."/>
            <person name="Ruiz S.J."/>
            <person name="Shao H."/>
            <person name="Sisson I."/>
            <person name="Sonaike T."/>
            <person name="Sorelle R.P."/>
            <person name="Sutton A.E."/>
            <person name="Svatek A.F."/>
            <person name="Svetz L.A."/>
            <person name="Tamerisa K.S."/>
            <person name="Taylor T.R."/>
            <person name="Teague B."/>
            <person name="Thomas N."/>
            <person name="Thorn R.D."/>
            <person name="Trejos Z.Y."/>
            <person name="Trevino B.K."/>
            <person name="Ukegbu O.N."/>
            <person name="Urban J.B."/>
            <person name="Vasquez L.I."/>
            <person name="Vera V.A."/>
            <person name="Villasana D.M."/>
            <person name="Wang L."/>
            <person name="Ward-Moore S."/>
            <person name="Warren J.T."/>
            <person name="Wei X."/>
            <person name="White F."/>
            <person name="Williamson A.L."/>
            <person name="Wleczyk R."/>
            <person name="Wooden H.S."/>
            <person name="Wooden S.H."/>
            <person name="Yen J."/>
            <person name="Yoon L."/>
            <person name="Yoon V."/>
            <person name="Zorrilla S.E."/>
            <person name="Nelson D."/>
            <person name="Kucherlapati R."/>
            <person name="Weinstock G."/>
            <person name="Gibbs R.A."/>
        </authorList>
    </citation>
    <scope>NUCLEOTIDE SEQUENCE [LARGE SCALE GENOMIC DNA]</scope>
</reference>
<reference key="6">
    <citation type="journal article" date="2004" name="Genome Res.">
        <title>The status, quality, and expansion of the NIH full-length cDNA project: the Mammalian Gene Collection (MGC).</title>
        <authorList>
            <consortium name="The MGC Project Team"/>
        </authorList>
    </citation>
    <scope>NUCLEOTIDE SEQUENCE [LARGE SCALE MRNA] (ISOFORM 1)</scope>
    <scope>NUCLEOTIDE SEQUENCE [LARGE SCALE MRNA] OF 1-722 (ISOFORM 4)</scope>
    <source>
        <tissue>Blood</tissue>
        <tissue>Brain</tissue>
    </source>
</reference>
<reference key="7">
    <citation type="journal article" date="2001" name="Biochim. Biophys. Acta">
        <title>Molecular cloning and analysis of the 5'-flanking region of human MYPT1 gene.</title>
        <authorList>
            <person name="Machida H."/>
            <person name="Ito M."/>
            <person name="Okamoto R."/>
            <person name="Shiraki K."/>
            <person name="Isaka N."/>
            <person name="Hartshorne D.J."/>
            <person name="Nakano T."/>
        </authorList>
    </citation>
    <scope>NUCLEOTIDE SEQUENCE [GENOMIC DNA] OF 1-79</scope>
</reference>
<reference key="8">
    <citation type="journal article" date="2009" name="Biochem. J.">
        <title>MYPT1, the targeting subunit of smooth-muscle myosin phosphatase, is a substrate for the asparaginyl hydroxylase factor inhibiting hypoxia-inducible factor (FIH).</title>
        <authorList>
            <person name="Webb J.D."/>
            <person name="Muranyi A."/>
            <person name="Pugh C.W."/>
            <person name="Ratcliffe P.J."/>
            <person name="Coleman M.L."/>
        </authorList>
    </citation>
    <scope>PROTEIN SEQUENCE OF 63-76; 95-105 AND 217-228</scope>
    <scope>FUNCTION</scope>
    <scope>HYDROXYLATION AT ASN-67; ASN-100 AND ASN-226 BY HIF1AN</scope>
</reference>
<reference key="9">
    <citation type="journal article" date="1999" name="Science">
        <title>Regulation of myosin phosphatase by a specific interaction with cGMP-dependent protein kinase Ialpha.</title>
        <authorList>
            <person name="Surks H.K."/>
            <person name="Mochizuki N."/>
            <person name="Kasai Y."/>
            <person name="Georgescu S.P."/>
            <person name="Tang K.M."/>
            <person name="Ito M."/>
            <person name="Lincoln T.M."/>
            <person name="Mendelsohn M.E."/>
        </authorList>
    </citation>
    <scope>INTERACTION WITH PRKG1</scope>
    <scope>PHOSPHORYLATION BY PRKG1</scope>
    <scope>SUBUNIT</scope>
</reference>
<reference key="10">
    <citation type="journal article" date="2001" name="FEBS Lett.">
        <title>Myotonic dystrophy protein kinase phosphorylates the myosin phosphatase targeting subunit and inhibits myosin phosphatase activity.</title>
        <authorList>
            <person name="Muranyi A."/>
            <person name="Zhang R."/>
            <person name="Liu F."/>
            <person name="Hirano K."/>
            <person name="Ito M."/>
            <person name="Epstein H.F."/>
            <person name="Hartshorne D.J."/>
        </authorList>
    </citation>
    <scope>PHOSPHORYLATION BY DMPK</scope>
</reference>
<reference key="11">
    <citation type="journal article" date="2001" name="J. Biol. Chem.">
        <title>Identification, characterization, and functional analysis of heart-specific myosin light chain phosphatase small subunit.</title>
        <authorList>
            <person name="Arimura T."/>
            <person name="Suematsu N."/>
            <person name="Zhou Y.-B."/>
            <person name="Nishimura J."/>
            <person name="Satoh S."/>
            <person name="Takeshita A."/>
            <person name="Kanaide H."/>
            <person name="Kimura A."/>
        </authorList>
    </citation>
    <scope>INTERACTION WITH PPP1R12B</scope>
</reference>
<reference key="12">
    <citation type="journal article" date="2001" name="J. Cell Biol.">
        <title>Rho-kinase--mediated contraction of isolated stress fibers.</title>
        <authorList>
            <person name="Katoh K."/>
            <person name="Kano Y."/>
            <person name="Amano M."/>
            <person name="Onishi H."/>
            <person name="Kaibuchi K."/>
            <person name="Fujiwara K."/>
        </authorList>
    </citation>
    <scope>PHOSPHORYLATION AT SER-852</scope>
</reference>
<reference key="13">
    <citation type="journal article" date="2001" name="Nat. Cell Biol.">
        <title>Caspase-3-mediated cleavage of ROCK I induces MLC phosphorylation and apoptotic membrane blebbing.</title>
        <authorList>
            <person name="Sebbagh M."/>
            <person name="Renvoize C."/>
            <person name="Hamelin J."/>
            <person name="Riche N."/>
            <person name="Bertoglio J."/>
            <person name="Breard J."/>
        </authorList>
    </citation>
    <scope>INTERACTION WITH ROCK1</scope>
    <scope>PHOSPHORYLATION</scope>
</reference>
<reference key="14">
    <citation type="journal article" date="2002" name="J. Biol. Chem.">
        <title>Phosphorylation of the myosin-binding subunit of myosin phosphatase by Raf-1 and inhibition of phosphatase activity.</title>
        <authorList>
            <person name="Broustas C.G."/>
            <person name="Grammatikakis N."/>
            <person name="Eto M."/>
            <person name="Dent P."/>
            <person name="Brautigan D.L."/>
            <person name="Kasid U."/>
        </authorList>
    </citation>
    <scope>PHOSPHORYLATION AT THR-696 BY RAF1</scope>
    <scope>INTERACTION WITH RAF1</scope>
</reference>
<reference key="15">
    <citation type="journal article" date="2003" name="Cell. Signal.">
        <title>Dimerization of cGMP-dependent protein kinase 1alpha and the myosin-binding subunit of myosin phosphatase: role of leucine zipper domains.</title>
        <authorList>
            <person name="Surks H.K."/>
            <person name="Mendelsohn M.E."/>
        </authorList>
    </citation>
    <scope>SUBUNIT</scope>
    <scope>MUTAGENESIS OF LEU-1007; LEU-1014; LEU-1021 AND LEU-1028</scope>
    <scope>INTERACTION WITH PRKG1</scope>
</reference>
<reference key="16">
    <citation type="journal article" date="2003" name="J. Biol. Chem.">
        <title>PDZ domain-mediated interaction of interleukin-16 precursor proteins with myosin phosphatase targeting subunits.</title>
        <authorList>
            <person name="Bannert N."/>
            <person name="Vollhardt K."/>
            <person name="Asomuddinov B."/>
            <person name="Haag M."/>
            <person name="Koenig H."/>
            <person name="Norley S."/>
            <person name="Kurth R."/>
        </authorList>
    </citation>
    <scope>INTERACTION WITH IL16</scope>
    <scope>SUBCELLULAR LOCATION</scope>
</reference>
<reference key="17">
    <citation type="journal article" date="2003" name="Mol. Cell. Biol.">
        <title>RhoE binds to ROCK I and inhibits downstream signaling.</title>
        <authorList>
            <person name="Riento K."/>
            <person name="Guasch R.M."/>
            <person name="Garg R."/>
            <person name="Jin B."/>
            <person name="Ridley A.J."/>
        </authorList>
    </citation>
    <scope>INTERACTION WITH ROCK1</scope>
    <scope>PHOSPHORYLATION</scope>
</reference>
<reference key="18">
    <citation type="journal article" date="2004" name="Anal. Chem.">
        <title>Robust phosphoproteomic profiling of tyrosine phosphorylation sites from human T cells using immobilized metal affinity chromatography and tandem mass spectrometry.</title>
        <authorList>
            <person name="Brill L.M."/>
            <person name="Salomon A.R."/>
            <person name="Ficarro S.B."/>
            <person name="Mukherji M."/>
            <person name="Stettler-Gill M."/>
            <person name="Peters E.C."/>
        </authorList>
    </citation>
    <scope>IDENTIFICATION BY MASS SPECTROMETRY [LARGE SCALE ANALYSIS]</scope>
    <source>
        <tissue>Leukemic T-cell</tissue>
    </source>
</reference>
<reference key="19">
    <citation type="journal article" date="2004" name="J. Biol. Chem.">
        <title>Smooth muscle phosphatase is regulated in vivo by exclusion of phosphorylation of threonine 696 of MYPT1 by phosphorylation of Serine 695 in response to cyclic nucleotides.</title>
        <authorList>
            <person name="Wooldridge A.A."/>
            <person name="MacDonald J.A."/>
            <person name="Erdodi F."/>
            <person name="Ma C."/>
            <person name="Borman M.A."/>
            <person name="Hartshorne D.J."/>
            <person name="Haystead T.A.J."/>
        </authorList>
    </citation>
    <scope>PHOSPHORYLATION AT SER-692; SER-695; THR-696 AND SER-852 BY PRKG1</scope>
</reference>
<reference key="20">
    <citation type="journal article" date="2005" name="Nat. Cell Biol.">
        <title>Cdc42-MRCK and Rho-ROCK signalling cooperate in myosin phosphorylation and cell invasion.</title>
        <authorList>
            <person name="Wilkinson S."/>
            <person name="Paterson H.F."/>
            <person name="Marshall C.J."/>
        </authorList>
    </citation>
    <scope>PHOSPHORYLATION AT THR-696</scope>
    <source>
        <tissue>Colon</tissue>
    </source>
</reference>
<reference key="21">
    <citation type="journal article" date="2006" name="Arch. Biochem. Biophys.">
        <title>Novel ZIP kinase isoform lacks leucine zipper.</title>
        <authorList>
            <person name="Takamoto N."/>
            <person name="Komatsu S."/>
            <person name="Komaba S."/>
            <person name="Niiro N."/>
            <person name="Ikebe M."/>
        </authorList>
    </citation>
    <scope>PHOSPHORYLATION BY ZIPK/DAPK3</scope>
    <scope>INTERACTION WITH ZIPK/DAPK3</scope>
</reference>
<reference key="22">
    <citation type="journal article" date="2006" name="Cell">
        <title>Global, in vivo, and site-specific phosphorylation dynamics in signaling networks.</title>
        <authorList>
            <person name="Olsen J.V."/>
            <person name="Blagoev B."/>
            <person name="Gnad F."/>
            <person name="Macek B."/>
            <person name="Kumar C."/>
            <person name="Mortensen P."/>
            <person name="Mann M."/>
        </authorList>
    </citation>
    <scope>IDENTIFICATION BY MASS SPECTROMETRY [LARGE SCALE ANALYSIS]</scope>
    <source>
        <tissue>Cervix carcinoma</tissue>
    </source>
</reference>
<reference key="23">
    <citation type="journal article" date="2006" name="PLoS Biol.">
        <title>Hem-1 complexes are essential for Rac activation, actin polymerization, and myosin regulation during neutrophil chemotaxis.</title>
        <authorList>
            <person name="Weiner O.D."/>
            <person name="Rentel M.C."/>
            <person name="Ott A."/>
            <person name="Brown G.E."/>
            <person name="Jedrychowski M."/>
            <person name="Yaffe M.B."/>
            <person name="Gygi S.P."/>
            <person name="Cantley L.C."/>
            <person name="Bourne H.R."/>
            <person name="Kirschner M.W."/>
        </authorList>
    </citation>
    <scope>INTERACTION WITH NCKAP1L</scope>
</reference>
<reference key="24">
    <citation type="journal article" date="2007" name="J. Mol. Biol.">
        <title>Interactions between the leucine-zipper motif of cGMP-dependent protein kinase and the C-terminal region of the targeting subunit of myosin light chain phosphatase.</title>
        <authorList>
            <person name="Lee E."/>
            <person name="Hayes D.B."/>
            <person name="Langsetmo K."/>
            <person name="Sundberg E.J."/>
            <person name="Tao T.C."/>
        </authorList>
    </citation>
    <scope>INTERACTION WITH PRKG1</scope>
</reference>
<reference key="25">
    <citation type="journal article" date="2008" name="Dev. Cell">
        <title>Myosin phosphatase-targeting subunit 1 regulates mitosis by antagonizing polo-like kinase 1.</title>
        <authorList>
            <person name="Yamashiro S."/>
            <person name="Yamakita Y."/>
            <person name="Totsukawa G."/>
            <person name="Goto H."/>
            <person name="Kaibuchi K."/>
            <person name="Ito M."/>
            <person name="Hartshorne D.J."/>
            <person name="Matsumura F."/>
        </authorList>
    </citation>
    <scope>FUNCTION</scope>
    <scope>SUBCELLULAR LOCATION</scope>
    <scope>PHOSPHORYLATION AT SER-432; SER-473 AND SER-601</scope>
    <scope>PHOSPHORYLATION BY PLK1</scope>
    <scope>MUTAGENESIS OF SER-473</scope>
</reference>
<reference key="26">
    <citation type="journal article" date="2008" name="J. Biol. Chem.">
        <title>Probing the interaction between the coiled coil leucine zipper of cGMP-dependent protein kinase Ialpha and the C terminus of the myosin binding subunit of the myosin light chain phosphatase.</title>
        <authorList>
            <person name="Sharma A.K."/>
            <person name="Zhou G.-P."/>
            <person name="Kupferman J."/>
            <person name="Surks H.K."/>
            <person name="Christensen E.N."/>
            <person name="Chou J.J."/>
            <person name="Mendelsohn M.E."/>
            <person name="Rigby A.C."/>
        </authorList>
    </citation>
    <scope>INTERACTION WITH PRKG1</scope>
    <scope>SUBUNIT</scope>
</reference>
<reference key="27">
    <citation type="journal article" date="2008" name="J. Proteome Res.">
        <title>Phosphorylation analysis of primary human T lymphocytes using sequential IMAC and titanium oxide enrichment.</title>
        <authorList>
            <person name="Carrascal M."/>
            <person name="Ovelleiro D."/>
            <person name="Casas V."/>
            <person name="Gay M."/>
            <person name="Abian J."/>
        </authorList>
    </citation>
    <scope>IDENTIFICATION BY MASS SPECTROMETRY [LARGE SCALE ANALYSIS]</scope>
    <source>
        <tissue>T-cell</tissue>
    </source>
</reference>
<reference key="28">
    <citation type="journal article" date="2008" name="J. Proteome Res.">
        <title>Phosphoproteome of resting human platelets.</title>
        <authorList>
            <person name="Zahedi R.P."/>
            <person name="Lewandrowski U."/>
            <person name="Wiesner J."/>
            <person name="Wortelkamp S."/>
            <person name="Moebius J."/>
            <person name="Schuetz C."/>
            <person name="Walter U."/>
            <person name="Gambaryan S."/>
            <person name="Sickmann A."/>
        </authorList>
    </citation>
    <scope>IDENTIFICATION BY MASS SPECTROMETRY [LARGE SCALE ANALYSIS]</scope>
    <source>
        <tissue>Platelet</tissue>
    </source>
</reference>
<reference key="29">
    <citation type="journal article" date="2008" name="Proc. Natl. Acad. Sci. U.S.A.">
        <title>A quantitative atlas of mitotic phosphorylation.</title>
        <authorList>
            <person name="Dephoure N."/>
            <person name="Zhou C."/>
            <person name="Villen J."/>
            <person name="Beausoleil S.A."/>
            <person name="Bakalarski C.E."/>
            <person name="Elledge S.J."/>
            <person name="Gygi S.P."/>
        </authorList>
    </citation>
    <scope>PHOSPHORYLATION [LARGE SCALE ANALYSIS] AT SER-299; SER-422; SER-445; SER-477; SER-507; THR-696; SER-862 AND SER-871</scope>
    <scope>IDENTIFICATION BY MASS SPECTROMETRY [LARGE SCALE ANALYSIS]</scope>
    <source>
        <tissue>Cervix carcinoma</tissue>
    </source>
</reference>
<reference key="30">
    <citation type="journal article" date="2009" name="Anal. Chem.">
        <title>Lys-N and trypsin cover complementary parts of the phosphoproteome in a refined SCX-based approach.</title>
        <authorList>
            <person name="Gauci S."/>
            <person name="Helbig A.O."/>
            <person name="Slijper M."/>
            <person name="Krijgsveld J."/>
            <person name="Heck A.J."/>
            <person name="Mohammed S."/>
        </authorList>
    </citation>
    <scope>IDENTIFICATION BY MASS SPECTROMETRY [LARGE SCALE ANALYSIS]</scope>
</reference>
<reference key="31">
    <citation type="journal article" date="2009" name="Circ. Res.">
        <title>ROCK isoform regulation of myosin phosphatase and contractility in vascular smooth muscle cells.</title>
        <authorList>
            <person name="Wang Y."/>
            <person name="Zheng X.R."/>
            <person name="Riddick N."/>
            <person name="Bryden M."/>
            <person name="Baur W."/>
            <person name="Zhang X."/>
            <person name="Surks H.K."/>
        </authorList>
    </citation>
    <scope>PHOSPHORYLATION</scope>
    <scope>INTERACTION WITH ROCK1 AND ROCK2</scope>
</reference>
<reference key="32">
    <citation type="journal article" date="2009" name="PLoS ONE">
        <title>Distinct roles for ROCK1 and ROCK2 in the regulation of keratinocyte differentiation.</title>
        <authorList>
            <person name="Lock F.E."/>
            <person name="Hotchin N.A."/>
        </authorList>
    </citation>
    <scope>PHOSPHORYLATION AT THR-696</scope>
</reference>
<reference key="33">
    <citation type="journal article" date="2009" name="Sci. Signal.">
        <title>Quantitative phosphoproteomic analysis of T cell receptor signaling reveals system-wide modulation of protein-protein interactions.</title>
        <authorList>
            <person name="Mayya V."/>
            <person name="Lundgren D.H."/>
            <person name="Hwang S.-I."/>
            <person name="Rezaul K."/>
            <person name="Wu L."/>
            <person name="Eng J.K."/>
            <person name="Rodionov V."/>
            <person name="Han D.K."/>
        </authorList>
    </citation>
    <scope>PHOSPHORYLATION [LARGE SCALE ANALYSIS] AT SER-871</scope>
    <scope>IDENTIFICATION BY MASS SPECTROMETRY [LARGE SCALE ANALYSIS]</scope>
    <source>
        <tissue>Leukemic T-cell</tissue>
    </source>
</reference>
<reference key="34">
    <citation type="journal article" date="2010" name="Sci. Signal.">
        <title>New roles for the LKB1-NUAK pathway in controlling myosin phosphatase complexes and cell adhesion.</title>
        <authorList>
            <person name="Zagorska A."/>
            <person name="Deak M."/>
            <person name="Campbell D.G."/>
            <person name="Banerjee S."/>
            <person name="Hirano M."/>
            <person name="Aizawa S."/>
            <person name="Prescott A.R."/>
            <person name="Alessi D.R."/>
        </authorList>
    </citation>
    <scope>FUNCTION</scope>
    <scope>INTERACTION WITH PPP1CB AND 14-3-3</scope>
    <scope>DOMAIN KVKF MOTIF</scope>
    <scope>PHOSPHORYLATION AT SER-445; SER-472 AND SER-910</scope>
</reference>
<reference key="35">
    <citation type="journal article" date="2010" name="J. Biol. Chem.">
        <title>Smoothelin-like 1 protein regulates myosin phosphatase-targeting subunit 1 expression during sexual development and pregnancy.</title>
        <authorList>
            <person name="Lontay B."/>
            <person name="Bodoor K."/>
            <person name="Weitzel D.H."/>
            <person name="Loiselle D."/>
            <person name="Fortner C."/>
            <person name="Lengyel S."/>
            <person name="Zheng D."/>
            <person name="Devente J."/>
            <person name="Hickner R."/>
            <person name="Haystead T.A."/>
        </authorList>
    </citation>
    <scope>TISSUE SPECIFICITY</scope>
    <scope>DEVELOPMENTAL STAGE</scope>
</reference>
<reference key="36">
    <citation type="journal article" date="2010" name="Sci. Signal.">
        <title>Quantitative phosphoproteomics reveals widespread full phosphorylation site occupancy during mitosis.</title>
        <authorList>
            <person name="Olsen J.V."/>
            <person name="Vermeulen M."/>
            <person name="Santamaria A."/>
            <person name="Kumar C."/>
            <person name="Miller M.L."/>
            <person name="Jensen L.J."/>
            <person name="Gnad F."/>
            <person name="Cox J."/>
            <person name="Jensen T.S."/>
            <person name="Nigg E.A."/>
            <person name="Brunak S."/>
            <person name="Mann M."/>
        </authorList>
    </citation>
    <scope>PHOSPHORYLATION [LARGE SCALE ANALYSIS] AT SER-299; SER-422 AND SER-871</scope>
    <scope>IDENTIFICATION BY MASS SPECTROMETRY [LARGE SCALE ANALYSIS]</scope>
    <source>
        <tissue>Cervix carcinoma</tissue>
    </source>
</reference>
<reference key="37">
    <citation type="journal article" date="2011" name="BMC Syst. Biol.">
        <title>Initial characterization of the human central proteome.</title>
        <authorList>
            <person name="Burkard T.R."/>
            <person name="Planyavsky M."/>
            <person name="Kaupe I."/>
            <person name="Breitwieser F.P."/>
            <person name="Buerckstuemmer T."/>
            <person name="Bennett K.L."/>
            <person name="Superti-Furga G."/>
            <person name="Colinge J."/>
        </authorList>
    </citation>
    <scope>IDENTIFICATION BY MASS SPECTROMETRY [LARGE SCALE ANALYSIS]</scope>
</reference>
<reference key="38">
    <citation type="journal article" date="2011" name="FEBS Lett.">
        <title>Chelerythrine perturbs lamellar actomyosin filaments by selective inhibition of myotonic dystrophy kinase-related Cdc42-binding kinase.</title>
        <authorList>
            <person name="Tan I."/>
            <person name="Lai J."/>
            <person name="Yong J."/>
            <person name="Li S.F."/>
            <person name="Leung T."/>
        </authorList>
    </citation>
    <scope>PHOSPHORYLATION BY CDC42BP AND DMPK</scope>
</reference>
<reference key="39">
    <citation type="journal article" date="2011" name="Sci. Signal.">
        <title>System-wide temporal characterization of the proteome and phosphoproteome of human embryonic stem cell differentiation.</title>
        <authorList>
            <person name="Rigbolt K.T."/>
            <person name="Prokhorova T.A."/>
            <person name="Akimov V."/>
            <person name="Henningsen J."/>
            <person name="Johansen P.T."/>
            <person name="Kratchmarova I."/>
            <person name="Kassem M."/>
            <person name="Mann M."/>
            <person name="Olsen J.V."/>
            <person name="Blagoev B."/>
        </authorList>
    </citation>
    <scope>PHOSPHORYLATION [LARGE SCALE ANALYSIS] AT SER-299; SER-422 AND SER-507</scope>
    <scope>IDENTIFICATION BY MASS SPECTROMETRY [LARGE SCALE ANALYSIS]</scope>
</reference>
<reference key="40">
    <citation type="journal article" date="2012" name="Proc. Natl. Acad. Sci. U.S.A.">
        <title>N-terminal acetylome analyses and functional insights of the N-terminal acetyltransferase NatB.</title>
        <authorList>
            <person name="Van Damme P."/>
            <person name="Lasa M."/>
            <person name="Polevoda B."/>
            <person name="Gazquez C."/>
            <person name="Elosegui-Artola A."/>
            <person name="Kim D.S."/>
            <person name="De Juan-Pardo E."/>
            <person name="Demeyer K."/>
            <person name="Hole K."/>
            <person name="Larrea E."/>
            <person name="Timmerman E."/>
            <person name="Prieto J."/>
            <person name="Arnesen T."/>
            <person name="Sherman F."/>
            <person name="Gevaert K."/>
            <person name="Aldabe R."/>
        </authorList>
    </citation>
    <scope>IDENTIFICATION BY MASS SPECTROMETRY [LARGE SCALE ANALYSIS]</scope>
</reference>
<reference key="41">
    <citation type="journal article" date="2013" name="J. Proteome Res.">
        <title>Toward a comprehensive characterization of a human cancer cell phosphoproteome.</title>
        <authorList>
            <person name="Zhou H."/>
            <person name="Di Palma S."/>
            <person name="Preisinger C."/>
            <person name="Peng M."/>
            <person name="Polat A.N."/>
            <person name="Heck A.J."/>
            <person name="Mohammed S."/>
        </authorList>
    </citation>
    <scope>PHOSPHORYLATION [LARGE SCALE ANALYSIS] AT SER-299; SER-422; THR-443; SER-445; TYR-446; SER-473; SER-507; SER-509; SER-618; THR-696; SER-903; SER-908; SER-910 AND SER-995</scope>
    <scope>IDENTIFICATION BY MASS SPECTROMETRY [LARGE SCALE ANALYSIS]</scope>
    <source>
        <tissue>Cervix carcinoma</tissue>
        <tissue>Erythroleukemia</tissue>
    </source>
</reference>
<reference key="42">
    <citation type="journal article" date="2014" name="J. Proteomics">
        <title>An enzyme assisted RP-RPLC approach for in-depth analysis of human liver phosphoproteome.</title>
        <authorList>
            <person name="Bian Y."/>
            <person name="Song C."/>
            <person name="Cheng K."/>
            <person name="Dong M."/>
            <person name="Wang F."/>
            <person name="Huang J."/>
            <person name="Sun D."/>
            <person name="Wang L."/>
            <person name="Ye M."/>
            <person name="Zou H."/>
        </authorList>
    </citation>
    <scope>IDENTIFICATION BY MASS SPECTROMETRY [LARGE SCALE ANALYSIS]</scope>
    <source>
        <tissue>Liver</tissue>
    </source>
</reference>
<reference key="43">
    <citation type="journal article" date="2020" name="Am. J. Hum. Genet.">
        <title>Loss-of-function variants in PPP1R12A: from isolated sex reversal to holoprosencephaly spectrum and urogenital malformations.</title>
        <authorList>
            <person name="Hughes J.J."/>
            <person name="Alkhunaizi E."/>
            <person name="Kruszka P."/>
            <person name="Pyle L.C."/>
            <person name="Grange D.K."/>
            <person name="Berger S.I."/>
            <person name="Payne K.K."/>
            <person name="Masser-Frye D."/>
            <person name="Hu T."/>
            <person name="Christie M.R."/>
            <person name="Clegg N.J."/>
            <person name="Everson J.L."/>
            <person name="Martinez A.F."/>
            <person name="Walsh L.E."/>
            <person name="Bedoukian E."/>
            <person name="Jones M.C."/>
            <person name="Harris C.J."/>
            <person name="Riedhammer K.M."/>
            <person name="Choukair D."/>
            <person name="Fechner P.Y."/>
            <person name="Rutter M.M."/>
            <person name="Hufnagel S.B."/>
            <person name="Roifman M."/>
            <person name="Kletter G.B."/>
            <person name="Delot E."/>
            <person name="Vilain E."/>
            <person name="Lipinski R.J."/>
            <person name="Vezina C.M."/>
            <person name="Muenke M."/>
            <person name="Chitayat D."/>
        </authorList>
    </citation>
    <scope>VARIANTS GUBS 472-SER--LYS-1030 DEL; 504-ARG--LYS-1030 DEL; 678-SER--LYS-1030 DEL; 858-TRP--LYS-1030 DEL AND 900-ARG--LYS-1030 DEL</scope>
    <scope>INVOLVEMENT IN GUBS</scope>
</reference>
<reference key="44">
    <citation type="journal article" date="2009" name="Proteins">
        <title>Solution structure of the inhibitory phosphorylation domain of myosin phosphatase targeting subunit 1.</title>
        <authorList>
            <person name="Mori S."/>
            <person name="Iwaoka R."/>
            <person name="Eto M."/>
            <person name="Ohki S.-Y."/>
        </authorList>
    </citation>
    <scope>STRUCTURE BY NMR OF 658-714</scope>
    <scope>PHOSPHORYLATION AT THR-696</scope>
</reference>
<organism>
    <name type="scientific">Homo sapiens</name>
    <name type="common">Human</name>
    <dbReference type="NCBI Taxonomy" id="9606"/>
    <lineage>
        <taxon>Eukaryota</taxon>
        <taxon>Metazoa</taxon>
        <taxon>Chordata</taxon>
        <taxon>Craniata</taxon>
        <taxon>Vertebrata</taxon>
        <taxon>Euteleostomi</taxon>
        <taxon>Mammalia</taxon>
        <taxon>Eutheria</taxon>
        <taxon>Euarchontoglires</taxon>
        <taxon>Primates</taxon>
        <taxon>Haplorrhini</taxon>
        <taxon>Catarrhini</taxon>
        <taxon>Hominidae</taxon>
        <taxon>Homo</taxon>
    </lineage>
</organism>
<protein>
    <recommendedName>
        <fullName>Protein phosphatase 1 regulatory subunit 12A</fullName>
    </recommendedName>
    <alternativeName>
        <fullName>Myosin phosphatase-targeting subunit 1</fullName>
        <shortName>Myosin phosphatase target subunit 1</shortName>
    </alternativeName>
    <alternativeName>
        <fullName>Protein phosphatase myosin-binding subunit</fullName>
    </alternativeName>
</protein>
<gene>
    <name evidence="33" type="primary">PPP1R12A</name>
    <name type="synonym">MBS</name>
    <name evidence="32" type="synonym">MYPT1</name>
</gene>
<accession>O14974</accession>
<accession>B4DZ09</accession>
<accession>F8VWB4</accession>
<accession>Q2NKL4</accession>
<accession>Q569H0</accession>
<accession>Q86WU3</accession>
<accession>Q8NFR6</accession>
<accession>Q9BYH0</accession>
<comment type="function">
    <text evidence="18 21 24">Key regulator of protein phosphatase 1C (PPP1C). Mediates binding to myosin. As part of the PPP1C complex, involved in dephosphorylation of PLK1. Capable of inhibiting HIF1AN-dependent suppression of HIF1A activity.</text>
</comment>
<comment type="subunit">
    <text evidence="2 4 5 6 9 10 11 12 15 16 17 19 20 24">PP1 comprises a catalytic subunit, PPP1CA, PPP1CB or PPP1CC, and one or several targeting or regulatory subunits. PPP1R12A mediates binding to myosin. Interacts with ARHA and CIT (By similarity). Binds PPP1R12B, ROCK1 and IL16. Interacts directly with PRKG1. Non-covalent dimer of 2 dimers; PRKG1-PRKG1 and PPP1R12A-PPP1R12A. Interacts with SMTNL1 (By similarity). Interacts with PPP1CB; the interaction is direct. Interacts (when phosphorylated at Ser-445, Ser-472 and Ser-910) with 14-3-3. Interacts with ROCK1 and ROCK2. Interacts with isoform 1 and isoform 2 of ZIPK/DAPK3. Interacts with RAF1. Interacts with HIF1AN. Interacts with NCKAP1L (PubMed:16417406).</text>
</comment>
<comment type="interaction">
    <interactant intactId="EBI-351726">
        <id>O14974</id>
    </interactant>
    <interactant intactId="EBI-702390">
        <id>Q9UBB4</id>
        <label>ATXN10</label>
    </interactant>
    <organismsDiffer>false</organismsDiffer>
    <experiments>4</experiments>
</comment>
<comment type="interaction">
    <interactant intactId="EBI-351726">
        <id>O14974</id>
    </interactant>
    <interactant intactId="EBI-77293">
        <id>O43293</id>
        <label>DAPK3</label>
    </interactant>
    <organismsDiffer>false</organismsDiffer>
    <experiments>5</experiments>
</comment>
<comment type="interaction">
    <interactant intactId="EBI-351726">
        <id>O14974</id>
    </interactant>
    <interactant intactId="EBI-852851">
        <id>P01100</id>
        <label>FOS</label>
    </interactant>
    <organismsDiffer>false</organismsDiffer>
    <experiments>2</experiments>
</comment>
<comment type="interaction">
    <interactant intactId="EBI-351726">
        <id>O14974</id>
    </interactant>
    <interactant intactId="EBI-15674919">
        <id>O18734</id>
        <label>CPI17</label>
    </interactant>
    <organismsDiffer>true</organismsDiffer>
    <experiments>2</experiments>
</comment>
<comment type="subcellular location">
    <subcellularLocation>
        <location evidence="12 18">Cytoplasm</location>
    </subcellularLocation>
    <subcellularLocation>
        <location evidence="12">Cytoplasm</location>
        <location evidence="12">Cytoskeleton</location>
        <location evidence="12">Stress fiber</location>
    </subcellularLocation>
    <text evidence="12">Also along actomyosin filaments.</text>
</comment>
<comment type="alternative products">
    <event type="alternative splicing"/>
    <isoform>
        <id>O14974-1</id>
        <name>1</name>
        <sequence type="displayed"/>
    </isoform>
    <isoform>
        <id>O14974-2</id>
        <name>2</name>
        <name>Myosin phosphatase target subunit 1 variant</name>
        <sequence type="described" ref="VSP_009253"/>
    </isoform>
    <isoform>
        <id>O14974-3</id>
        <name>3</name>
        <name>Myosin phosphatase target subunit 1 variant 2</name>
        <sequence type="described" ref="VSP_009251"/>
    </isoform>
    <isoform>
        <id>O14974-4</id>
        <name>4</name>
        <sequence type="described" ref="VSP_009252"/>
    </isoform>
    <isoform>
        <id>O14974-5</id>
        <name>5</name>
        <sequence type="described" ref="VSP_045079"/>
    </isoform>
</comment>
<comment type="tissue specificity">
    <text evidence="25">Expressed in striated muscles, specifically in type 2a fibers (at protein level).</text>
</comment>
<comment type="developmental stage">
    <text evidence="25">Induced by 2-fold during pregnancy, including in abdominus rectus muscle.</text>
</comment>
<comment type="domain">
    <text evidence="1">Heterotetramerization is mediated by the interaction between a coiled-coil of PRKG1 and the leucine/isoleucine zipper of PPP1R12A/MBS, the myosin-binding subunit of the myosin phosphatase.</text>
</comment>
<comment type="domain">
    <text evidence="24">The KVKF motif mediates interaction with PPP1CB.</text>
</comment>
<comment type="PTM">
    <text evidence="1 4 6 7 8 9 10 13 14 16 18 20 22 23 24 26">Phosphorylated by CIT (Rho-associated kinase) (By similarity). Phosphorylated cooperatively by ROCK1 and CDC42BP on Thr-696. Phosphorylated on upon DNA damage, probably by ATM or ATR. In vitro, phosphorylation of Ser-695 by PKA and PKG appears to prevent phosphorylation of the inhibitory site Thr-696, probably mediated by PRKG1. Phosphorylation at Ser-445, Ser-472 and Ser-910 by NUAK1 promotes interaction with 14-3-3, leading to inhibit interaction with myosin light chain MLC2, preventing dephosphorylation of MLC2. May be phosphorylated at Thr-696 by DMPK; may inhibit the myosin phosphatase activity. Phosphorylated at Ser-473 by CDK1 during mitosis, creating docking sites for the POLO box domains of PLK1. Subsequently, PLK1 binds and phosphorylates PPP1R12A.</text>
</comment>
<comment type="disease" evidence="27">
    <disease id="DI-05791">
        <name>Genitourinary and/or brain malformation syndrome</name>
        <acronym>GUBS</acronym>
        <description>An autosomal dominant syndrome characterized by multiple congenital anomalies including urogenital malformations and brain abnormalities ranging from agenesis of the corpus callosum to anencephaly.</description>
        <dbReference type="MIM" id="618820"/>
    </disease>
    <text>The disease is caused by variants affecting the gene represented in this entry.</text>
</comment>
<comment type="sequence caution" evidence="32">
    <conflict type="miscellaneous discrepancy">
        <sequence resource="EMBL-CDS" id="AAH47898"/>
    </conflict>
    <text>Contaminating sequence. Potential poly-A sequence.</text>
</comment>
<comment type="sequence caution" evidence="32">
    <conflict type="miscellaneous discrepancy">
        <sequence resource="EMBL-CDS" id="AAH92481"/>
    </conflict>
    <text>Contaminating sequence. Potential poly-A sequence.</text>
</comment>
<dbReference type="EMBL" id="D87930">
    <property type="protein sequence ID" value="BAA22378.1"/>
    <property type="molecule type" value="mRNA"/>
</dbReference>
<dbReference type="EMBL" id="AY380574">
    <property type="protein sequence ID" value="AAQ88438.1"/>
    <property type="molecule type" value="mRNA"/>
</dbReference>
<dbReference type="EMBL" id="AF458589">
    <property type="protein sequence ID" value="AAM49717.1"/>
    <property type="molecule type" value="mRNA"/>
</dbReference>
<dbReference type="EMBL" id="AK302692">
    <property type="protein sequence ID" value="BAG63921.1"/>
    <property type="molecule type" value="mRNA"/>
</dbReference>
<dbReference type="EMBL" id="AC018476">
    <property type="status" value="NOT_ANNOTATED_CDS"/>
    <property type="molecule type" value="Genomic_DNA"/>
</dbReference>
<dbReference type="EMBL" id="AC073569">
    <property type="status" value="NOT_ANNOTATED_CDS"/>
    <property type="molecule type" value="Genomic_DNA"/>
</dbReference>
<dbReference type="EMBL" id="AC074270">
    <property type="status" value="NOT_ANNOTATED_CDS"/>
    <property type="molecule type" value="Genomic_DNA"/>
</dbReference>
<dbReference type="EMBL" id="BC047898">
    <property type="protein sequence ID" value="AAH47898.1"/>
    <property type="status" value="ALT_SEQ"/>
    <property type="molecule type" value="mRNA"/>
</dbReference>
<dbReference type="EMBL" id="BC092481">
    <property type="protein sequence ID" value="AAH92481.1"/>
    <property type="status" value="ALT_SEQ"/>
    <property type="molecule type" value="mRNA"/>
</dbReference>
<dbReference type="EMBL" id="BC111752">
    <property type="protein sequence ID" value="AAI11753.1"/>
    <property type="molecule type" value="mRNA"/>
</dbReference>
<dbReference type="EMBL" id="AB042196">
    <property type="protein sequence ID" value="BAB39107.1"/>
    <property type="molecule type" value="Genomic_DNA"/>
</dbReference>
<dbReference type="CCDS" id="CCDS44947.1">
    <molecule id="O14974-1"/>
</dbReference>
<dbReference type="CCDS" id="CCDS44948.1">
    <molecule id="O14974-5"/>
</dbReference>
<dbReference type="CCDS" id="CCDS58259.1">
    <molecule id="O14974-3"/>
</dbReference>
<dbReference type="CCDS" id="CCDS58260.1">
    <molecule id="O14974-2"/>
</dbReference>
<dbReference type="RefSeq" id="NP_001137357.1">
    <molecule id="O14974-1"/>
    <property type="nucleotide sequence ID" value="NM_001143885.2"/>
</dbReference>
<dbReference type="RefSeq" id="NP_001137358.1">
    <molecule id="O14974-5"/>
    <property type="nucleotide sequence ID" value="NM_001143886.2"/>
</dbReference>
<dbReference type="RefSeq" id="NP_001231919.1">
    <molecule id="O14974-2"/>
    <property type="nucleotide sequence ID" value="NM_001244990.2"/>
</dbReference>
<dbReference type="RefSeq" id="NP_001231921.1">
    <molecule id="O14974-3"/>
    <property type="nucleotide sequence ID" value="NM_001244992.1"/>
</dbReference>
<dbReference type="RefSeq" id="NP_002471.1">
    <molecule id="O14974-1"/>
    <property type="nucleotide sequence ID" value="NM_002480.3"/>
</dbReference>
<dbReference type="RefSeq" id="XP_011536685.1">
    <property type="nucleotide sequence ID" value="XM_011538383.2"/>
</dbReference>
<dbReference type="PDB" id="2KJY">
    <property type="method" value="NMR"/>
    <property type="chains" value="A=658-714"/>
</dbReference>
<dbReference type="PDB" id="5HUZ">
    <property type="method" value="NMR"/>
    <property type="chains" value="A/B=931-978"/>
</dbReference>
<dbReference type="PDBsum" id="2KJY"/>
<dbReference type="PDBsum" id="5HUZ"/>
<dbReference type="BMRB" id="O14974"/>
<dbReference type="SMR" id="O14974"/>
<dbReference type="BioGRID" id="110742">
    <property type="interactions" value="365"/>
</dbReference>
<dbReference type="CORUM" id="O14974"/>
<dbReference type="DIP" id="DIP-33186N"/>
<dbReference type="ELM" id="O14974"/>
<dbReference type="FunCoup" id="O14974">
    <property type="interactions" value="3360"/>
</dbReference>
<dbReference type="IntAct" id="O14974">
    <property type="interactions" value="165"/>
</dbReference>
<dbReference type="MINT" id="O14974"/>
<dbReference type="STRING" id="9606.ENSP00000389168"/>
<dbReference type="GlyCosmos" id="O14974">
    <property type="glycosylation" value="51 sites, 2 glycans"/>
</dbReference>
<dbReference type="GlyGen" id="O14974">
    <property type="glycosylation" value="60 sites, 2 O-linked glycans (57 sites)"/>
</dbReference>
<dbReference type="iPTMnet" id="O14974"/>
<dbReference type="MetOSite" id="O14974"/>
<dbReference type="PhosphoSitePlus" id="O14974"/>
<dbReference type="BioMuta" id="PPP1R12A"/>
<dbReference type="OGP" id="O14974"/>
<dbReference type="jPOST" id="O14974"/>
<dbReference type="MassIVE" id="O14974"/>
<dbReference type="PaxDb" id="9606-ENSP00000389168"/>
<dbReference type="PeptideAtlas" id="O14974"/>
<dbReference type="ProteomicsDB" id="28963"/>
<dbReference type="ProteomicsDB" id="48344">
    <molecule id="O14974-1"/>
</dbReference>
<dbReference type="ProteomicsDB" id="48345">
    <molecule id="O14974-2"/>
</dbReference>
<dbReference type="ProteomicsDB" id="48346">
    <molecule id="O14974-3"/>
</dbReference>
<dbReference type="ProteomicsDB" id="48347">
    <molecule id="O14974-4"/>
</dbReference>
<dbReference type="Pumba" id="O14974"/>
<dbReference type="Antibodypedia" id="29770">
    <property type="antibodies" value="606 antibodies from 37 providers"/>
</dbReference>
<dbReference type="DNASU" id="4659"/>
<dbReference type="Ensembl" id="ENST00000261207.9">
    <molecule id="O14974-1"/>
    <property type="protein sequence ID" value="ENSP00000261207.5"/>
    <property type="gene ID" value="ENSG00000058272.19"/>
</dbReference>
<dbReference type="Ensembl" id="ENST00000437004.6">
    <molecule id="O14974-2"/>
    <property type="protein sequence ID" value="ENSP00000416769.2"/>
    <property type="gene ID" value="ENSG00000058272.19"/>
</dbReference>
<dbReference type="Ensembl" id="ENST00000450142.7">
    <molecule id="O14974-1"/>
    <property type="protein sequence ID" value="ENSP00000389168.2"/>
    <property type="gene ID" value="ENSG00000058272.19"/>
</dbReference>
<dbReference type="Ensembl" id="ENST00000546369.5">
    <molecule id="O14974-5"/>
    <property type="protein sequence ID" value="ENSP00000449514.1"/>
    <property type="gene ID" value="ENSG00000058272.19"/>
</dbReference>
<dbReference type="Ensembl" id="ENST00000550107.5">
    <molecule id="O14974-3"/>
    <property type="protein sequence ID" value="ENSP00000446855.1"/>
    <property type="gene ID" value="ENSG00000058272.19"/>
</dbReference>
<dbReference type="GeneID" id="4659"/>
<dbReference type="KEGG" id="hsa:4659"/>
<dbReference type="MANE-Select" id="ENST00000450142.7">
    <property type="protein sequence ID" value="ENSP00000389168.2"/>
    <property type="RefSeq nucleotide sequence ID" value="NM_002480.3"/>
    <property type="RefSeq protein sequence ID" value="NP_002471.1"/>
</dbReference>
<dbReference type="UCSC" id="uc001syz.4">
    <molecule id="O14974-1"/>
    <property type="organism name" value="human"/>
</dbReference>
<dbReference type="AGR" id="HGNC:7618"/>
<dbReference type="CTD" id="4659"/>
<dbReference type="DisGeNET" id="4659"/>
<dbReference type="GeneCards" id="PPP1R12A"/>
<dbReference type="GeneReviews" id="PPP1R12A"/>
<dbReference type="HGNC" id="HGNC:7618">
    <property type="gene designation" value="PPP1R12A"/>
</dbReference>
<dbReference type="HPA" id="ENSG00000058272">
    <property type="expression patterns" value="Low tissue specificity"/>
</dbReference>
<dbReference type="MalaCards" id="PPP1R12A"/>
<dbReference type="MIM" id="602021">
    <property type="type" value="gene"/>
</dbReference>
<dbReference type="MIM" id="618820">
    <property type="type" value="phenotype"/>
</dbReference>
<dbReference type="neXtProt" id="NX_O14974"/>
<dbReference type="OpenTargets" id="ENSG00000058272"/>
<dbReference type="PharmGKB" id="PA33617"/>
<dbReference type="VEuPathDB" id="HostDB:ENSG00000058272"/>
<dbReference type="eggNOG" id="KOG0505">
    <property type="taxonomic scope" value="Eukaryota"/>
</dbReference>
<dbReference type="GeneTree" id="ENSGT00940000156120"/>
<dbReference type="InParanoid" id="O14974"/>
<dbReference type="OMA" id="MENHVDK"/>
<dbReference type="OrthoDB" id="539213at2759"/>
<dbReference type="PAN-GO" id="O14974">
    <property type="GO annotations" value="6 GO annotations based on evolutionary models"/>
</dbReference>
<dbReference type="PhylomeDB" id="O14974"/>
<dbReference type="TreeFam" id="TF105543"/>
<dbReference type="BRENDA" id="3.1.3.53">
    <property type="organism ID" value="2681"/>
</dbReference>
<dbReference type="PathwayCommons" id="O14974"/>
<dbReference type="Reactome" id="R-HSA-2565942">
    <property type="pathway name" value="Regulation of PLK1 Activity at G2/M Transition"/>
</dbReference>
<dbReference type="Reactome" id="R-HSA-5625740">
    <property type="pathway name" value="RHO GTPases activate PKNs"/>
</dbReference>
<dbReference type="Reactome" id="R-HSA-5625900">
    <property type="pathway name" value="RHO GTPases activate CIT"/>
</dbReference>
<dbReference type="Reactome" id="R-HSA-5627117">
    <property type="pathway name" value="RHO GTPases Activate ROCKs"/>
</dbReference>
<dbReference type="Reactome" id="R-HSA-5627123">
    <property type="pathway name" value="RHO GTPases activate PAKs"/>
</dbReference>
<dbReference type="SignaLink" id="O14974"/>
<dbReference type="SIGNOR" id="O14974"/>
<dbReference type="BioGRID-ORCS" id="4659">
    <property type="hits" value="720 hits in 1165 CRISPR screens"/>
</dbReference>
<dbReference type="CD-CODE" id="DEE660B4">
    <property type="entry name" value="Stress granule"/>
</dbReference>
<dbReference type="CD-CODE" id="FB4E32DD">
    <property type="entry name" value="Presynaptic clusters and postsynaptic densities"/>
</dbReference>
<dbReference type="ChiTaRS" id="PPP1R12A">
    <property type="organism name" value="human"/>
</dbReference>
<dbReference type="EvolutionaryTrace" id="O14974"/>
<dbReference type="GeneWiki" id="PPP1R12A"/>
<dbReference type="GenomeRNAi" id="4659"/>
<dbReference type="Pharos" id="O14974">
    <property type="development level" value="Tbio"/>
</dbReference>
<dbReference type="PRO" id="PR:O14974"/>
<dbReference type="Proteomes" id="UP000005640">
    <property type="component" value="Chromosome 12"/>
</dbReference>
<dbReference type="RNAct" id="O14974">
    <property type="molecule type" value="protein"/>
</dbReference>
<dbReference type="Bgee" id="ENSG00000058272">
    <property type="expression patterns" value="Expressed in calcaneal tendon and 218 other cell types or tissues"/>
</dbReference>
<dbReference type="ExpressionAtlas" id="O14974">
    <property type="expression patterns" value="baseline and differential"/>
</dbReference>
<dbReference type="GO" id="GO:0031672">
    <property type="term" value="C:A band"/>
    <property type="evidence" value="ECO:0000250"/>
    <property type="project" value="UniProtKB"/>
</dbReference>
<dbReference type="GO" id="GO:0015629">
    <property type="term" value="C:actin cytoskeleton"/>
    <property type="evidence" value="ECO:0000314"/>
    <property type="project" value="HPA"/>
</dbReference>
<dbReference type="GO" id="GO:0005813">
    <property type="term" value="C:centrosome"/>
    <property type="evidence" value="ECO:0000314"/>
    <property type="project" value="UniProtKB"/>
</dbReference>
<dbReference type="GO" id="GO:0043292">
    <property type="term" value="C:contractile muscle fiber"/>
    <property type="evidence" value="ECO:0000314"/>
    <property type="project" value="UniProtKB"/>
</dbReference>
<dbReference type="GO" id="GO:0005737">
    <property type="term" value="C:cytoplasm"/>
    <property type="evidence" value="ECO:0000318"/>
    <property type="project" value="GO_Central"/>
</dbReference>
<dbReference type="GO" id="GO:0005829">
    <property type="term" value="C:cytosol"/>
    <property type="evidence" value="ECO:0000314"/>
    <property type="project" value="HPA"/>
</dbReference>
<dbReference type="GO" id="GO:0005925">
    <property type="term" value="C:focal adhesion"/>
    <property type="evidence" value="ECO:0007005"/>
    <property type="project" value="UniProtKB"/>
</dbReference>
<dbReference type="GO" id="GO:0000776">
    <property type="term" value="C:kinetochore"/>
    <property type="evidence" value="ECO:0000314"/>
    <property type="project" value="UniProtKB"/>
</dbReference>
<dbReference type="GO" id="GO:0005730">
    <property type="term" value="C:nucleolus"/>
    <property type="evidence" value="ECO:0000314"/>
    <property type="project" value="HPA"/>
</dbReference>
<dbReference type="GO" id="GO:0005654">
    <property type="term" value="C:nucleoplasm"/>
    <property type="evidence" value="ECO:0000304"/>
    <property type="project" value="Reactome"/>
</dbReference>
<dbReference type="GO" id="GO:0005886">
    <property type="term" value="C:plasma membrane"/>
    <property type="evidence" value="ECO:0000314"/>
    <property type="project" value="HPA"/>
</dbReference>
<dbReference type="GO" id="GO:0072357">
    <property type="term" value="C:PTW/PP1 phosphatase complex"/>
    <property type="evidence" value="ECO:0000314"/>
    <property type="project" value="UniProtKB"/>
</dbReference>
<dbReference type="GO" id="GO:0001725">
    <property type="term" value="C:stress fiber"/>
    <property type="evidence" value="ECO:0007669"/>
    <property type="project" value="UniProtKB-SubCell"/>
</dbReference>
<dbReference type="GO" id="GO:0030018">
    <property type="term" value="C:Z disc"/>
    <property type="evidence" value="ECO:0000250"/>
    <property type="project" value="UniProtKB"/>
</dbReference>
<dbReference type="GO" id="GO:0071889">
    <property type="term" value="F:14-3-3 protein binding"/>
    <property type="evidence" value="ECO:0000314"/>
    <property type="project" value="UniProtKB"/>
</dbReference>
<dbReference type="GO" id="GO:0004857">
    <property type="term" value="F:enzyme inhibitor activity"/>
    <property type="evidence" value="ECO:0000314"/>
    <property type="project" value="UniProtKB"/>
</dbReference>
<dbReference type="GO" id="GO:0017020">
    <property type="term" value="F:myosin phosphatase regulator activity"/>
    <property type="evidence" value="ECO:0000318"/>
    <property type="project" value="GO_Central"/>
</dbReference>
<dbReference type="GO" id="GO:0019208">
    <property type="term" value="F:phosphatase regulator activity"/>
    <property type="evidence" value="ECO:0000314"/>
    <property type="project" value="UniProtKB"/>
</dbReference>
<dbReference type="GO" id="GO:0019901">
    <property type="term" value="F:protein kinase binding"/>
    <property type="evidence" value="ECO:0000353"/>
    <property type="project" value="UniProtKB"/>
</dbReference>
<dbReference type="GO" id="GO:0071466">
    <property type="term" value="P:cellular response to xenobiotic stimulus"/>
    <property type="evidence" value="ECO:0007669"/>
    <property type="project" value="Ensembl"/>
</dbReference>
<dbReference type="GO" id="GO:0007098">
    <property type="term" value="P:centrosome cycle"/>
    <property type="evidence" value="ECO:0000315"/>
    <property type="project" value="UniProtKB"/>
</dbReference>
<dbReference type="GO" id="GO:0000278">
    <property type="term" value="P:mitotic cell cycle"/>
    <property type="evidence" value="ECO:0000315"/>
    <property type="project" value="UniProtKB"/>
</dbReference>
<dbReference type="GO" id="GO:0043086">
    <property type="term" value="P:negative regulation of catalytic activity"/>
    <property type="evidence" value="ECO:0000314"/>
    <property type="project" value="UniProtKB"/>
</dbReference>
<dbReference type="GO" id="GO:0048812">
    <property type="term" value="P:neuron projection morphogenesis"/>
    <property type="evidence" value="ECO:0000318"/>
    <property type="project" value="GO_Central"/>
</dbReference>
<dbReference type="GO" id="GO:0045944">
    <property type="term" value="P:positive regulation of transcription by RNA polymerase II"/>
    <property type="evidence" value="ECO:0000314"/>
    <property type="project" value="UniProtKB"/>
</dbReference>
<dbReference type="GO" id="GO:0006470">
    <property type="term" value="P:protein dephosphorylation"/>
    <property type="evidence" value="ECO:0000315"/>
    <property type="project" value="UniProtKB"/>
</dbReference>
<dbReference type="GO" id="GO:0030155">
    <property type="term" value="P:regulation of cell adhesion"/>
    <property type="evidence" value="ECO:0000314"/>
    <property type="project" value="UniProtKB"/>
</dbReference>
<dbReference type="GO" id="GO:0046822">
    <property type="term" value="P:regulation of nucleocytoplasmic transport"/>
    <property type="evidence" value="ECO:0007669"/>
    <property type="project" value="Ensembl"/>
</dbReference>
<dbReference type="GO" id="GO:0007165">
    <property type="term" value="P:signal transduction"/>
    <property type="evidence" value="ECO:0007669"/>
    <property type="project" value="InterPro"/>
</dbReference>
<dbReference type="CDD" id="cd21944">
    <property type="entry name" value="IPD_MYPT1"/>
    <property type="match status" value="1"/>
</dbReference>
<dbReference type="DisProt" id="DP01163"/>
<dbReference type="FunFam" id="1.25.40.20:FF:000004">
    <property type="entry name" value="Phosphatase 1 regulatory subunit 12A"/>
    <property type="match status" value="1"/>
</dbReference>
<dbReference type="FunFam" id="1.25.40.20:FF:000876">
    <property type="entry name" value="Protein phosphatase 1 regulatory subunit 12A"/>
    <property type="match status" value="1"/>
</dbReference>
<dbReference type="Gene3D" id="6.10.140.390">
    <property type="match status" value="1"/>
</dbReference>
<dbReference type="Gene3D" id="6.10.250.1820">
    <property type="match status" value="1"/>
</dbReference>
<dbReference type="Gene3D" id="1.25.40.20">
    <property type="entry name" value="Ankyrin repeat-containing domain"/>
    <property type="match status" value="2"/>
</dbReference>
<dbReference type="InterPro" id="IPR002110">
    <property type="entry name" value="Ankyrin_rpt"/>
</dbReference>
<dbReference type="InterPro" id="IPR036770">
    <property type="entry name" value="Ankyrin_rpt-contain_sf"/>
</dbReference>
<dbReference type="InterPro" id="IPR017401">
    <property type="entry name" value="MYPT1/MYPT2/Mbs85"/>
</dbReference>
<dbReference type="InterPro" id="IPR051226">
    <property type="entry name" value="PP1_Regulatory_Subunit"/>
</dbReference>
<dbReference type="InterPro" id="IPR031775">
    <property type="entry name" value="PRKG1_interact"/>
</dbReference>
<dbReference type="PANTHER" id="PTHR24179">
    <property type="entry name" value="PROTEIN PHOSPHATASE 1 REGULATORY SUBUNIT 12"/>
    <property type="match status" value="1"/>
</dbReference>
<dbReference type="PANTHER" id="PTHR24179:SF20">
    <property type="entry name" value="PROTEIN PHOSPHATASE 1 REGULATORY SUBUNIT 12A"/>
    <property type="match status" value="1"/>
</dbReference>
<dbReference type="Pfam" id="PF12796">
    <property type="entry name" value="Ank_2"/>
    <property type="match status" value="2"/>
</dbReference>
<dbReference type="Pfam" id="PF15898">
    <property type="entry name" value="PRKG1_interact"/>
    <property type="match status" value="1"/>
</dbReference>
<dbReference type="PIRSF" id="PIRSF038141">
    <property type="entry name" value="PP1_12ABC_vert"/>
    <property type="match status" value="1"/>
</dbReference>
<dbReference type="PRINTS" id="PR01415">
    <property type="entry name" value="ANKYRIN"/>
</dbReference>
<dbReference type="SMART" id="SM00248">
    <property type="entry name" value="ANK"/>
    <property type="match status" value="6"/>
</dbReference>
<dbReference type="SUPFAM" id="SSF48403">
    <property type="entry name" value="Ankyrin repeat"/>
    <property type="match status" value="1"/>
</dbReference>
<dbReference type="PROSITE" id="PS50297">
    <property type="entry name" value="ANK_REP_REGION"/>
    <property type="match status" value="1"/>
</dbReference>
<dbReference type="PROSITE" id="PS50088">
    <property type="entry name" value="ANK_REPEAT"/>
    <property type="match status" value="4"/>
</dbReference>
<name>MYPT1_HUMAN</name>
<keyword id="KW-0002">3D-structure</keyword>
<keyword id="KW-0025">Alternative splicing</keyword>
<keyword id="KW-0040">ANK repeat</keyword>
<keyword id="KW-0963">Cytoplasm</keyword>
<keyword id="KW-0206">Cytoskeleton</keyword>
<keyword id="KW-0903">Direct protein sequencing</keyword>
<keyword id="KW-0225">Disease variant</keyword>
<keyword id="KW-0379">Hydroxylation</keyword>
<keyword id="KW-0597">Phosphoprotein</keyword>
<keyword id="KW-1267">Proteomics identification</keyword>
<keyword id="KW-1185">Reference proteome</keyword>
<keyword id="KW-0677">Repeat</keyword>